<accession>B6J6U2</accession>
<dbReference type="EC" id="5.1.1.1" evidence="1"/>
<dbReference type="EMBL" id="CP001020">
    <property type="protein sequence ID" value="ACJ19991.1"/>
    <property type="molecule type" value="Genomic_DNA"/>
</dbReference>
<dbReference type="RefSeq" id="WP_005768812.1">
    <property type="nucleotide sequence ID" value="NC_011528.1"/>
</dbReference>
<dbReference type="SMR" id="B6J6U2"/>
<dbReference type="KEGG" id="cbc:CbuK_0736"/>
<dbReference type="HOGENOM" id="CLU_028393_1_0_6"/>
<dbReference type="UniPathway" id="UPA00042">
    <property type="reaction ID" value="UER00497"/>
</dbReference>
<dbReference type="GO" id="GO:0005829">
    <property type="term" value="C:cytosol"/>
    <property type="evidence" value="ECO:0007669"/>
    <property type="project" value="TreeGrafter"/>
</dbReference>
<dbReference type="GO" id="GO:0008784">
    <property type="term" value="F:alanine racemase activity"/>
    <property type="evidence" value="ECO:0007669"/>
    <property type="project" value="UniProtKB-UniRule"/>
</dbReference>
<dbReference type="GO" id="GO:0030170">
    <property type="term" value="F:pyridoxal phosphate binding"/>
    <property type="evidence" value="ECO:0007669"/>
    <property type="project" value="UniProtKB-UniRule"/>
</dbReference>
<dbReference type="GO" id="GO:0030632">
    <property type="term" value="P:D-alanine biosynthetic process"/>
    <property type="evidence" value="ECO:0007669"/>
    <property type="project" value="UniProtKB-UniRule"/>
</dbReference>
<dbReference type="CDD" id="cd06827">
    <property type="entry name" value="PLPDE_III_AR_proteobact"/>
    <property type="match status" value="1"/>
</dbReference>
<dbReference type="FunFam" id="2.40.37.10:FF:000002">
    <property type="entry name" value="Alanine racemase"/>
    <property type="match status" value="1"/>
</dbReference>
<dbReference type="FunFam" id="3.20.20.10:FF:000044">
    <property type="entry name" value="Alanine racemase"/>
    <property type="match status" value="1"/>
</dbReference>
<dbReference type="Gene3D" id="3.20.20.10">
    <property type="entry name" value="Alanine racemase"/>
    <property type="match status" value="1"/>
</dbReference>
<dbReference type="Gene3D" id="2.40.37.10">
    <property type="entry name" value="Lyase, Ornithine Decarboxylase, Chain A, domain 1"/>
    <property type="match status" value="1"/>
</dbReference>
<dbReference type="HAMAP" id="MF_01201">
    <property type="entry name" value="Ala_racemase"/>
    <property type="match status" value="1"/>
</dbReference>
<dbReference type="InterPro" id="IPR000821">
    <property type="entry name" value="Ala_racemase"/>
</dbReference>
<dbReference type="InterPro" id="IPR009006">
    <property type="entry name" value="Ala_racemase/Decarboxylase_C"/>
</dbReference>
<dbReference type="InterPro" id="IPR011079">
    <property type="entry name" value="Ala_racemase_C"/>
</dbReference>
<dbReference type="InterPro" id="IPR001608">
    <property type="entry name" value="Ala_racemase_N"/>
</dbReference>
<dbReference type="InterPro" id="IPR029066">
    <property type="entry name" value="PLP-binding_barrel"/>
</dbReference>
<dbReference type="NCBIfam" id="TIGR00492">
    <property type="entry name" value="alr"/>
    <property type="match status" value="1"/>
</dbReference>
<dbReference type="PANTHER" id="PTHR30511">
    <property type="entry name" value="ALANINE RACEMASE"/>
    <property type="match status" value="1"/>
</dbReference>
<dbReference type="PANTHER" id="PTHR30511:SF4">
    <property type="entry name" value="ALANINE RACEMASE, BIOSYNTHETIC"/>
    <property type="match status" value="1"/>
</dbReference>
<dbReference type="Pfam" id="PF00842">
    <property type="entry name" value="Ala_racemase_C"/>
    <property type="match status" value="1"/>
</dbReference>
<dbReference type="Pfam" id="PF01168">
    <property type="entry name" value="Ala_racemase_N"/>
    <property type="match status" value="1"/>
</dbReference>
<dbReference type="PRINTS" id="PR00992">
    <property type="entry name" value="ALARACEMASE"/>
</dbReference>
<dbReference type="SMART" id="SM01005">
    <property type="entry name" value="Ala_racemase_C"/>
    <property type="match status" value="1"/>
</dbReference>
<dbReference type="SUPFAM" id="SSF50621">
    <property type="entry name" value="Alanine racemase C-terminal domain-like"/>
    <property type="match status" value="1"/>
</dbReference>
<dbReference type="SUPFAM" id="SSF51419">
    <property type="entry name" value="PLP-binding barrel"/>
    <property type="match status" value="1"/>
</dbReference>
<feature type="chain" id="PRO_1000138591" description="Alanine racemase">
    <location>
        <begin position="1"/>
        <end position="364"/>
    </location>
</feature>
<feature type="active site" description="Proton acceptor; specific for D-alanine" evidence="1">
    <location>
        <position position="34"/>
    </location>
</feature>
<feature type="active site" description="Proton acceptor; specific for L-alanine" evidence="1">
    <location>
        <position position="259"/>
    </location>
</feature>
<feature type="binding site" evidence="1">
    <location>
        <position position="129"/>
    </location>
    <ligand>
        <name>substrate</name>
    </ligand>
</feature>
<feature type="binding site" evidence="1">
    <location>
        <position position="307"/>
    </location>
    <ligand>
        <name>substrate</name>
    </ligand>
</feature>
<feature type="modified residue" description="N6-(pyridoxal phosphate)lysine" evidence="1">
    <location>
        <position position="34"/>
    </location>
</feature>
<sequence>MNRATATINVTALKHNLSQIKALAPKSLAWAMIKSNGYGHGLVRVAKALSDANAFGVACIDEALTLREVGIKSPIIVMKGFYNEAELSQFARHRLGAVIHCSDQVSLLEKTNLTSSLSVWLKIDTGMNRLGFSVEQSPAVYNQLKTSSSIQKPIGLMTHLADADNENKTFTELQIKRFFSVTEKMIGPKSIVNSAGFFAYPNALVDLIRPGIILYGISPFGINYNSFKEKIEKKFRPVMTLSAKIIAIKNRRQNDSVGYGCTWSCPEDMPIAIVSIGYGDGYPRHAPSGTPVLLNGKICPLIGRVSMDMIAIDLRSQPNAQVGDDVILWGEGLPVEIIAEKAGTIAYELLCKITQRVQFIEIEK</sequence>
<name>ALR_COXB1</name>
<keyword id="KW-0413">Isomerase</keyword>
<keyword id="KW-0663">Pyridoxal phosphate</keyword>
<gene>
    <name type="primary">alr</name>
    <name type="ordered locus">CbuK_0736</name>
</gene>
<evidence type="ECO:0000255" key="1">
    <source>
        <dbReference type="HAMAP-Rule" id="MF_01201"/>
    </source>
</evidence>
<proteinExistence type="inferred from homology"/>
<reference key="1">
    <citation type="journal article" date="2009" name="Infect. Immun.">
        <title>Comparative genomics reveal extensive transposon-mediated genomic plasticity and diversity among potential effector proteins within the genus Coxiella.</title>
        <authorList>
            <person name="Beare P.A."/>
            <person name="Unsworth N."/>
            <person name="Andoh M."/>
            <person name="Voth D.E."/>
            <person name="Omsland A."/>
            <person name="Gilk S.D."/>
            <person name="Williams K.P."/>
            <person name="Sobral B.W."/>
            <person name="Kupko J.J. III"/>
            <person name="Porcella S.F."/>
            <person name="Samuel J.E."/>
            <person name="Heinzen R.A."/>
        </authorList>
    </citation>
    <scope>NUCLEOTIDE SEQUENCE [LARGE SCALE GENOMIC DNA]</scope>
    <source>
        <strain>CbuK_Q154</strain>
    </source>
</reference>
<comment type="function">
    <text evidence="1">Catalyzes the interconversion of L-alanine and D-alanine. May also act on other amino acids.</text>
</comment>
<comment type="catalytic activity">
    <reaction evidence="1">
        <text>L-alanine = D-alanine</text>
        <dbReference type="Rhea" id="RHEA:20249"/>
        <dbReference type="ChEBI" id="CHEBI:57416"/>
        <dbReference type="ChEBI" id="CHEBI:57972"/>
        <dbReference type="EC" id="5.1.1.1"/>
    </reaction>
</comment>
<comment type="cofactor">
    <cofactor evidence="1">
        <name>pyridoxal 5'-phosphate</name>
        <dbReference type="ChEBI" id="CHEBI:597326"/>
    </cofactor>
</comment>
<comment type="pathway">
    <text evidence="1">Amino-acid biosynthesis; D-alanine biosynthesis; D-alanine from L-alanine: step 1/1.</text>
</comment>
<comment type="similarity">
    <text evidence="1">Belongs to the alanine racemase family.</text>
</comment>
<organism>
    <name type="scientific">Coxiella burnetii (strain CbuK_Q154)</name>
    <name type="common">Coxiella burnetii (strain Q154)</name>
    <dbReference type="NCBI Taxonomy" id="434924"/>
    <lineage>
        <taxon>Bacteria</taxon>
        <taxon>Pseudomonadati</taxon>
        <taxon>Pseudomonadota</taxon>
        <taxon>Gammaproteobacteria</taxon>
        <taxon>Legionellales</taxon>
        <taxon>Coxiellaceae</taxon>
        <taxon>Coxiella</taxon>
    </lineage>
</organism>
<protein>
    <recommendedName>
        <fullName evidence="1">Alanine racemase</fullName>
        <ecNumber evidence="1">5.1.1.1</ecNumber>
    </recommendedName>
</protein>